<protein>
    <recommendedName>
        <fullName evidence="1">Imidazole glycerol phosphate synthase subunit HisF</fullName>
        <ecNumber evidence="1">4.3.2.10</ecNumber>
    </recommendedName>
    <alternativeName>
        <fullName evidence="1">IGP synthase cyclase subunit</fullName>
    </alternativeName>
    <alternativeName>
        <fullName evidence="1">IGP synthase subunit HisF</fullName>
    </alternativeName>
    <alternativeName>
        <fullName evidence="1">ImGP synthase subunit HisF</fullName>
        <shortName evidence="1">IGPS subunit HisF</shortName>
    </alternativeName>
</protein>
<gene>
    <name evidence="1" type="primary">hisF</name>
    <name type="ordered locus">ECUMN_2367</name>
</gene>
<comment type="function">
    <text evidence="1">IGPS catalyzes the conversion of PRFAR and glutamine to IGP, AICAR and glutamate. The HisF subunit catalyzes the cyclization activity that produces IGP and AICAR from PRFAR using the ammonia provided by the HisH subunit.</text>
</comment>
<comment type="catalytic activity">
    <reaction evidence="1">
        <text>5-[(5-phospho-1-deoxy-D-ribulos-1-ylimino)methylamino]-1-(5-phospho-beta-D-ribosyl)imidazole-4-carboxamide + L-glutamine = D-erythro-1-(imidazol-4-yl)glycerol 3-phosphate + 5-amino-1-(5-phospho-beta-D-ribosyl)imidazole-4-carboxamide + L-glutamate + H(+)</text>
        <dbReference type="Rhea" id="RHEA:24793"/>
        <dbReference type="ChEBI" id="CHEBI:15378"/>
        <dbReference type="ChEBI" id="CHEBI:29985"/>
        <dbReference type="ChEBI" id="CHEBI:58278"/>
        <dbReference type="ChEBI" id="CHEBI:58359"/>
        <dbReference type="ChEBI" id="CHEBI:58475"/>
        <dbReference type="ChEBI" id="CHEBI:58525"/>
        <dbReference type="EC" id="4.3.2.10"/>
    </reaction>
</comment>
<comment type="pathway">
    <text evidence="1">Amino-acid biosynthesis; L-histidine biosynthesis; L-histidine from 5-phospho-alpha-D-ribose 1-diphosphate: step 5/9.</text>
</comment>
<comment type="subunit">
    <text evidence="1">Heterodimer of HisH and HisF.</text>
</comment>
<comment type="subcellular location">
    <subcellularLocation>
        <location evidence="1">Cytoplasm</location>
    </subcellularLocation>
</comment>
<comment type="similarity">
    <text evidence="1">Belongs to the HisA/HisF family.</text>
</comment>
<reference key="1">
    <citation type="journal article" date="2009" name="PLoS Genet.">
        <title>Organised genome dynamics in the Escherichia coli species results in highly diverse adaptive paths.</title>
        <authorList>
            <person name="Touchon M."/>
            <person name="Hoede C."/>
            <person name="Tenaillon O."/>
            <person name="Barbe V."/>
            <person name="Baeriswyl S."/>
            <person name="Bidet P."/>
            <person name="Bingen E."/>
            <person name="Bonacorsi S."/>
            <person name="Bouchier C."/>
            <person name="Bouvet O."/>
            <person name="Calteau A."/>
            <person name="Chiapello H."/>
            <person name="Clermont O."/>
            <person name="Cruveiller S."/>
            <person name="Danchin A."/>
            <person name="Diard M."/>
            <person name="Dossat C."/>
            <person name="Karoui M.E."/>
            <person name="Frapy E."/>
            <person name="Garry L."/>
            <person name="Ghigo J.M."/>
            <person name="Gilles A.M."/>
            <person name="Johnson J."/>
            <person name="Le Bouguenec C."/>
            <person name="Lescat M."/>
            <person name="Mangenot S."/>
            <person name="Martinez-Jehanne V."/>
            <person name="Matic I."/>
            <person name="Nassif X."/>
            <person name="Oztas S."/>
            <person name="Petit M.A."/>
            <person name="Pichon C."/>
            <person name="Rouy Z."/>
            <person name="Ruf C.S."/>
            <person name="Schneider D."/>
            <person name="Tourret J."/>
            <person name="Vacherie B."/>
            <person name="Vallenet D."/>
            <person name="Medigue C."/>
            <person name="Rocha E.P.C."/>
            <person name="Denamur E."/>
        </authorList>
    </citation>
    <scope>NUCLEOTIDE SEQUENCE [LARGE SCALE GENOMIC DNA]</scope>
    <source>
        <strain>UMN026 / ExPEC</strain>
    </source>
</reference>
<dbReference type="EC" id="4.3.2.10" evidence="1"/>
<dbReference type="EMBL" id="CU928163">
    <property type="protein sequence ID" value="CAR13555.1"/>
    <property type="molecule type" value="Genomic_DNA"/>
</dbReference>
<dbReference type="RefSeq" id="WP_000880172.1">
    <property type="nucleotide sequence ID" value="NC_011751.1"/>
</dbReference>
<dbReference type="RefSeq" id="YP_002413083.1">
    <property type="nucleotide sequence ID" value="NC_011751.1"/>
</dbReference>
<dbReference type="SMR" id="B7NC65"/>
<dbReference type="STRING" id="585056.ECUMN_2367"/>
<dbReference type="KEGG" id="eum:ECUMN_2367"/>
<dbReference type="PATRIC" id="fig|585056.7.peg.2548"/>
<dbReference type="HOGENOM" id="CLU_048577_4_0_6"/>
<dbReference type="UniPathway" id="UPA00031">
    <property type="reaction ID" value="UER00010"/>
</dbReference>
<dbReference type="Proteomes" id="UP000007097">
    <property type="component" value="Chromosome"/>
</dbReference>
<dbReference type="GO" id="GO:0005737">
    <property type="term" value="C:cytoplasm"/>
    <property type="evidence" value="ECO:0007669"/>
    <property type="project" value="UniProtKB-SubCell"/>
</dbReference>
<dbReference type="GO" id="GO:0000107">
    <property type="term" value="F:imidazoleglycerol-phosphate synthase activity"/>
    <property type="evidence" value="ECO:0007669"/>
    <property type="project" value="UniProtKB-UniRule"/>
</dbReference>
<dbReference type="GO" id="GO:0016829">
    <property type="term" value="F:lyase activity"/>
    <property type="evidence" value="ECO:0007669"/>
    <property type="project" value="UniProtKB-KW"/>
</dbReference>
<dbReference type="GO" id="GO:0000105">
    <property type="term" value="P:L-histidine biosynthetic process"/>
    <property type="evidence" value="ECO:0007669"/>
    <property type="project" value="UniProtKB-UniRule"/>
</dbReference>
<dbReference type="CDD" id="cd04731">
    <property type="entry name" value="HisF"/>
    <property type="match status" value="1"/>
</dbReference>
<dbReference type="FunFam" id="3.20.20.70:FF:000006">
    <property type="entry name" value="Imidazole glycerol phosphate synthase subunit HisF"/>
    <property type="match status" value="1"/>
</dbReference>
<dbReference type="Gene3D" id="3.20.20.70">
    <property type="entry name" value="Aldolase class I"/>
    <property type="match status" value="1"/>
</dbReference>
<dbReference type="HAMAP" id="MF_01013">
    <property type="entry name" value="HisF"/>
    <property type="match status" value="1"/>
</dbReference>
<dbReference type="InterPro" id="IPR013785">
    <property type="entry name" value="Aldolase_TIM"/>
</dbReference>
<dbReference type="InterPro" id="IPR006062">
    <property type="entry name" value="His_biosynth"/>
</dbReference>
<dbReference type="InterPro" id="IPR004651">
    <property type="entry name" value="HisF"/>
</dbReference>
<dbReference type="InterPro" id="IPR050064">
    <property type="entry name" value="IGPS_HisA/HisF"/>
</dbReference>
<dbReference type="InterPro" id="IPR011060">
    <property type="entry name" value="RibuloseP-bd_barrel"/>
</dbReference>
<dbReference type="NCBIfam" id="TIGR00735">
    <property type="entry name" value="hisF"/>
    <property type="match status" value="1"/>
</dbReference>
<dbReference type="PANTHER" id="PTHR21235:SF2">
    <property type="entry name" value="IMIDAZOLE GLYCEROL PHOSPHATE SYNTHASE HISHF"/>
    <property type="match status" value="1"/>
</dbReference>
<dbReference type="PANTHER" id="PTHR21235">
    <property type="entry name" value="IMIDAZOLE GLYCEROL PHOSPHATE SYNTHASE SUBUNIT HISF/H IGP SYNTHASE SUBUNIT HISF/H"/>
    <property type="match status" value="1"/>
</dbReference>
<dbReference type="Pfam" id="PF00977">
    <property type="entry name" value="His_biosynth"/>
    <property type="match status" value="1"/>
</dbReference>
<dbReference type="SUPFAM" id="SSF51366">
    <property type="entry name" value="Ribulose-phoshate binding barrel"/>
    <property type="match status" value="1"/>
</dbReference>
<proteinExistence type="inferred from homology"/>
<keyword id="KW-0028">Amino-acid biosynthesis</keyword>
<keyword id="KW-0963">Cytoplasm</keyword>
<keyword id="KW-0368">Histidine biosynthesis</keyword>
<keyword id="KW-0456">Lyase</keyword>
<accession>B7NC65</accession>
<sequence length="258" mass="28457">MLAKRIIPCLDVRDGQVVKGVQFRNHEIIGDIVPLAKRYAEEGADELVFYDITASSDGRVVDKSWVSRVAEVIDIPFCVAGGIKSLEDAAKILSFGADKISINSPALADPTLITRLADRFGVQCIVVGIDTWYDAETGKYHVNQYTGDESRTRVTQWETLDWVEEVQKRGAGEIVLNMMNQDGVRNGYDLDQLKKVREVCHVPLIASGGAGTMEHFLEAFRDADVDGALAASVFHKQIINISELKAYLASQGVEIRIC</sequence>
<organism>
    <name type="scientific">Escherichia coli O17:K52:H18 (strain UMN026 / ExPEC)</name>
    <dbReference type="NCBI Taxonomy" id="585056"/>
    <lineage>
        <taxon>Bacteria</taxon>
        <taxon>Pseudomonadati</taxon>
        <taxon>Pseudomonadota</taxon>
        <taxon>Gammaproteobacteria</taxon>
        <taxon>Enterobacterales</taxon>
        <taxon>Enterobacteriaceae</taxon>
        <taxon>Escherichia</taxon>
    </lineage>
</organism>
<name>HIS6_ECOLU</name>
<feature type="chain" id="PRO_1000134998" description="Imidazole glycerol phosphate synthase subunit HisF">
    <location>
        <begin position="1"/>
        <end position="258"/>
    </location>
</feature>
<feature type="active site" evidence="1">
    <location>
        <position position="11"/>
    </location>
</feature>
<feature type="active site" evidence="1">
    <location>
        <position position="130"/>
    </location>
</feature>
<evidence type="ECO:0000255" key="1">
    <source>
        <dbReference type="HAMAP-Rule" id="MF_01013"/>
    </source>
</evidence>